<accession>O62743</accession>
<accession>O62744</accession>
<accession>O62745</accession>
<accession>O62746</accession>
<dbReference type="EMBL" id="AF051902">
    <property type="protein sequence ID" value="AAC39830.1"/>
    <property type="molecule type" value="Genomic_DNA"/>
</dbReference>
<dbReference type="EMBL" id="AF051903">
    <property type="protein sequence ID" value="AAC39831.1"/>
    <property type="molecule type" value="Genomic_DNA"/>
</dbReference>
<dbReference type="EMBL" id="AF051904">
    <property type="protein sequence ID" value="AAC39832.1"/>
    <property type="molecule type" value="Genomic_DNA"/>
</dbReference>
<dbReference type="EMBL" id="AF051905">
    <property type="protein sequence ID" value="AAC39833.1"/>
    <property type="molecule type" value="Genomic_DNA"/>
</dbReference>
<dbReference type="SMR" id="O62743"/>
<dbReference type="STRING" id="9531.ENSCATP00000036258"/>
<dbReference type="GlyCosmos" id="O62743">
    <property type="glycosylation" value="2 sites, No reported glycans"/>
</dbReference>
<dbReference type="Proteomes" id="UP000233060">
    <property type="component" value="Unassembled WGS sequence"/>
</dbReference>
<dbReference type="GO" id="GO:0005737">
    <property type="term" value="C:cytoplasm"/>
    <property type="evidence" value="ECO:0007669"/>
    <property type="project" value="TreeGrafter"/>
</dbReference>
<dbReference type="GO" id="GO:0009897">
    <property type="term" value="C:external side of plasma membrane"/>
    <property type="evidence" value="ECO:0000250"/>
    <property type="project" value="UniProtKB"/>
</dbReference>
<dbReference type="GO" id="GO:0016493">
    <property type="term" value="F:C-C chemokine receptor activity"/>
    <property type="evidence" value="ECO:0000250"/>
    <property type="project" value="UniProtKB"/>
</dbReference>
<dbReference type="GO" id="GO:0071791">
    <property type="term" value="F:chemokine (C-C motif) ligand 5 binding"/>
    <property type="evidence" value="ECO:0007669"/>
    <property type="project" value="TreeGrafter"/>
</dbReference>
<dbReference type="GO" id="GO:0019722">
    <property type="term" value="P:calcium-mediated signaling"/>
    <property type="evidence" value="ECO:0007669"/>
    <property type="project" value="TreeGrafter"/>
</dbReference>
<dbReference type="GO" id="GO:0060326">
    <property type="term" value="P:cell chemotaxis"/>
    <property type="evidence" value="ECO:0007669"/>
    <property type="project" value="TreeGrafter"/>
</dbReference>
<dbReference type="GO" id="GO:0006955">
    <property type="term" value="P:immune response"/>
    <property type="evidence" value="ECO:0007669"/>
    <property type="project" value="InterPro"/>
</dbReference>
<dbReference type="GO" id="GO:0006954">
    <property type="term" value="P:inflammatory response"/>
    <property type="evidence" value="ECO:0007669"/>
    <property type="project" value="InterPro"/>
</dbReference>
<dbReference type="GO" id="GO:0007204">
    <property type="term" value="P:positive regulation of cytosolic calcium ion concentration"/>
    <property type="evidence" value="ECO:0007669"/>
    <property type="project" value="TreeGrafter"/>
</dbReference>
<dbReference type="CDD" id="cd15184">
    <property type="entry name" value="7tmA_CCR5_CCR2"/>
    <property type="match status" value="1"/>
</dbReference>
<dbReference type="FunFam" id="1.20.1070.10:FF:000026">
    <property type="entry name" value="C-C chemokine receptor type 5"/>
    <property type="match status" value="1"/>
</dbReference>
<dbReference type="Gene3D" id="1.20.1070.10">
    <property type="entry name" value="Rhodopsin 7-helix transmembrane proteins"/>
    <property type="match status" value="1"/>
</dbReference>
<dbReference type="InterPro" id="IPR050119">
    <property type="entry name" value="CCR1-9-like"/>
</dbReference>
<dbReference type="InterPro" id="IPR002240">
    <property type="entry name" value="Chemokine_CCR5"/>
</dbReference>
<dbReference type="InterPro" id="IPR000355">
    <property type="entry name" value="Chemokine_rcpt"/>
</dbReference>
<dbReference type="InterPro" id="IPR000276">
    <property type="entry name" value="GPCR_Rhodpsn"/>
</dbReference>
<dbReference type="InterPro" id="IPR017452">
    <property type="entry name" value="GPCR_Rhodpsn_7TM"/>
</dbReference>
<dbReference type="PANTHER" id="PTHR10489:SF686">
    <property type="entry name" value="C-C CHEMOKINE RECEPTOR TYPE 5"/>
    <property type="match status" value="1"/>
</dbReference>
<dbReference type="PANTHER" id="PTHR10489">
    <property type="entry name" value="CELL ADHESION MOLECULE"/>
    <property type="match status" value="1"/>
</dbReference>
<dbReference type="Pfam" id="PF00001">
    <property type="entry name" value="7tm_1"/>
    <property type="match status" value="1"/>
</dbReference>
<dbReference type="PRINTS" id="PR00657">
    <property type="entry name" value="CCCHEMOKINER"/>
</dbReference>
<dbReference type="PRINTS" id="PR01110">
    <property type="entry name" value="CHEMOKINER5"/>
</dbReference>
<dbReference type="PRINTS" id="PR00237">
    <property type="entry name" value="GPCRRHODOPSN"/>
</dbReference>
<dbReference type="SUPFAM" id="SSF81321">
    <property type="entry name" value="Family A G protein-coupled receptor-like"/>
    <property type="match status" value="1"/>
</dbReference>
<dbReference type="PROSITE" id="PS00237">
    <property type="entry name" value="G_PROTEIN_RECEP_F1_1"/>
    <property type="match status" value="1"/>
</dbReference>
<dbReference type="PROSITE" id="PS50262">
    <property type="entry name" value="G_PROTEIN_RECEP_F1_2"/>
    <property type="match status" value="1"/>
</dbReference>
<protein>
    <recommendedName>
        <fullName>C-C chemokine receptor type 5</fullName>
        <shortName>C-C CKR-5</shortName>
        <shortName>CC-CKR-5</shortName>
        <shortName>CCR-5</shortName>
        <shortName>CCR5</shortName>
    </recommendedName>
    <cdAntigenName>CD195</cdAntigenName>
</protein>
<evidence type="ECO:0000250" key="1">
    <source>
        <dbReference type="UniProtKB" id="P51681"/>
    </source>
</evidence>
<evidence type="ECO:0000250" key="2">
    <source>
        <dbReference type="UniProtKB" id="Q9XT76"/>
    </source>
</evidence>
<evidence type="ECO:0000255" key="3"/>
<evidence type="ECO:0000255" key="4">
    <source>
        <dbReference type="PROSITE-ProRule" id="PRU00521"/>
    </source>
</evidence>
<reference key="1">
    <citation type="journal article" date="1998" name="Virology">
        <title>Primary SIVsm isolates use the CCR5 coreceptor from sooty mangabeys naturally infected in west Africa: a comparison of coreceptor usage of primary SIVsm, HIV-2, and SIVmac.</title>
        <authorList>
            <person name="Chen Z."/>
            <person name="Gettie A."/>
            <person name="Ho D.D."/>
            <person name="Marx P.A."/>
        </authorList>
    </citation>
    <scope>NUCLEOTIDE SEQUENCE [GENOMIC DNA]</scope>
</reference>
<proteinExistence type="inferred from homology"/>
<name>CCR5_CERAT</name>
<keyword id="KW-1003">Cell membrane</keyword>
<keyword id="KW-1015">Disulfide bond</keyword>
<keyword id="KW-0297">G-protein coupled receptor</keyword>
<keyword id="KW-0325">Glycoprotein</keyword>
<keyword id="KW-0449">Lipoprotein</keyword>
<keyword id="KW-0472">Membrane</keyword>
<keyword id="KW-0564">Palmitate</keyword>
<keyword id="KW-0597">Phosphoprotein</keyword>
<keyword id="KW-0675">Receptor</keyword>
<keyword id="KW-1185">Reference proteome</keyword>
<keyword id="KW-0765">Sulfation</keyword>
<keyword id="KW-0807">Transducer</keyword>
<keyword id="KW-0812">Transmembrane</keyword>
<keyword id="KW-1133">Transmembrane helix</keyword>
<comment type="function">
    <text evidence="1">Receptor for a number of inflammatory CC-chemokines including CCL3/MIP-1-alpha, CCL4/MIP-1-beta and RANTES and subsequently transduces a signal by increasing the intracellular calcium ion level. May play a role in the control of granulocytic lineage proliferation or differentiation. Participates in T-lymphocyte migration to the infection site by acting as a chemotactic receptor.</text>
</comment>
<comment type="subunit">
    <text evidence="1">Interacts with PRAF2. Efficient ligand binding to CCL3/MIP-1alpha and CCL4/MIP-1beta requires sulfation, O-glycosylation and sialic acid modifications. Glycosylation on Ser-6 is required for efficient binding of CCL4. Interacts with GRK2. Interacts with ARRB1 and ARRB2. Interacts with CNIH4. Interacts with S100A4; this interaction stimulates T-lymphocyte chemotaxis.</text>
</comment>
<comment type="subcellular location">
    <subcellularLocation>
        <location evidence="2">Cell membrane</location>
        <topology evidence="2">Multi-pass membrane protein</topology>
    </subcellularLocation>
</comment>
<comment type="PTM">
    <text evidence="1">Sulfated on at least 2 of the N-terminal tyrosines. Sulfation is required for efficient binding of the chemokines, CCL3 and CCL4 (By similarity).</text>
</comment>
<comment type="PTM">
    <text evidence="1">Palmitoylation in the C-terminal is important for cell surface expression.</text>
</comment>
<comment type="PTM">
    <text evidence="1">Phosphorylation on serine residues in the C-terminal is stimulated by binding CC chemokines especially by APO-RANTES.</text>
</comment>
<comment type="PTM">
    <text evidence="1">O-glycosylated, but not N-glycosylated. Ser-6 appears to be the major site even if Ser-7 may be also O-glycosylated. Also sialylated glycans present which contribute to chemokine binding. Thr-16 and Ser-17 may also be glycosylated and, if so, with small moieties such as a T-antigen.</text>
</comment>
<comment type="similarity">
    <text evidence="4">Belongs to the G-protein coupled receptor 1 family.</text>
</comment>
<sequence length="352" mass="40489">MDYQVSSPTYDIDYYTSEPCQKINVKQIAARLLPPLYSLVFIFGFVGNILVVLILINCKRLKSMTDIYLLNLAISDLLFLLTVPFWAHYAAAQWDFGNTMCQLLTGLYFIGFFSGIFFIILLTIDRYLAIVHAVFALKARTVTFGVVTSVITWVVAVFASLPGIIFTRSQREGLHYTCSPHFPYSQYQFWKNFQTLKIVILGLVLPLLVMVICYSGILKTLLRCRNEKKRHRAVRLIFTIMIVYFLFWAPYNIVLLLNTFQEFFGLNNCSSSNRLDQAMQVTETLGMTHCCINPIIYAFVGEKFRNYLLVFFQKHIAKRFCKCCSIFQQEASERASSVYTRSTGEQEISVGL</sequence>
<feature type="chain" id="PRO_0000069253" description="C-C chemokine receptor type 5">
    <location>
        <begin position="1"/>
        <end position="352"/>
    </location>
</feature>
<feature type="topological domain" description="Extracellular" evidence="3">
    <location>
        <begin position="1"/>
        <end position="30"/>
    </location>
</feature>
<feature type="transmembrane region" description="Helical; Name=1" evidence="3">
    <location>
        <begin position="31"/>
        <end position="58"/>
    </location>
</feature>
<feature type="topological domain" description="Cytoplasmic" evidence="3">
    <location>
        <begin position="59"/>
        <end position="68"/>
    </location>
</feature>
<feature type="transmembrane region" description="Helical; Name=2" evidence="3">
    <location>
        <begin position="69"/>
        <end position="89"/>
    </location>
</feature>
<feature type="topological domain" description="Extracellular" evidence="3">
    <location>
        <begin position="90"/>
        <end position="102"/>
    </location>
</feature>
<feature type="transmembrane region" description="Helical; Name=3" evidence="3">
    <location>
        <begin position="103"/>
        <end position="124"/>
    </location>
</feature>
<feature type="topological domain" description="Cytoplasmic" evidence="3">
    <location>
        <begin position="125"/>
        <end position="141"/>
    </location>
</feature>
<feature type="transmembrane region" description="Helical; Name=4" evidence="3">
    <location>
        <begin position="142"/>
        <end position="166"/>
    </location>
</feature>
<feature type="topological domain" description="Extracellular" evidence="3">
    <location>
        <begin position="167"/>
        <end position="198"/>
    </location>
</feature>
<feature type="transmembrane region" description="Helical; Name=5" evidence="3">
    <location>
        <begin position="199"/>
        <end position="218"/>
    </location>
</feature>
<feature type="topological domain" description="Cytoplasmic" evidence="3">
    <location>
        <begin position="219"/>
        <end position="235"/>
    </location>
</feature>
<feature type="transmembrane region" description="Helical; Name=6" evidence="3">
    <location>
        <begin position="236"/>
        <end position="260"/>
    </location>
</feature>
<feature type="topological domain" description="Extracellular" evidence="3">
    <location>
        <begin position="261"/>
        <end position="277"/>
    </location>
</feature>
<feature type="transmembrane region" description="Helical; Name=7" evidence="3">
    <location>
        <begin position="278"/>
        <end position="301"/>
    </location>
</feature>
<feature type="topological domain" description="Cytoplasmic" evidence="3">
    <location>
        <begin position="302"/>
        <end position="352"/>
    </location>
</feature>
<feature type="modified residue" description="Sulfotyrosine" evidence="1">
    <location>
        <position position="3"/>
    </location>
</feature>
<feature type="modified residue" description="Sulfotyrosine" evidence="3">
    <location>
        <position position="10"/>
    </location>
</feature>
<feature type="modified residue" description="Sulfotyrosine" evidence="3">
    <location>
        <position position="14"/>
    </location>
</feature>
<feature type="modified residue" description="Sulfotyrosine" evidence="3">
    <location>
        <position position="15"/>
    </location>
</feature>
<feature type="modified residue" description="Phosphoserine; by BARK1" evidence="1">
    <location>
        <position position="336"/>
    </location>
</feature>
<feature type="modified residue" description="Phosphoserine; by BARK1" evidence="1">
    <location>
        <position position="337"/>
    </location>
</feature>
<feature type="modified residue" description="Phosphoserine; by BARK1" evidence="1">
    <location>
        <position position="342"/>
    </location>
</feature>
<feature type="modified residue" description="Phosphoserine; by BARK1" evidence="1">
    <location>
        <position position="349"/>
    </location>
</feature>
<feature type="lipid moiety-binding region" description="S-palmitoyl cysteine" evidence="1">
    <location>
        <position position="321"/>
    </location>
</feature>
<feature type="lipid moiety-binding region" description="S-palmitoyl cysteine" evidence="1">
    <location>
        <position position="323"/>
    </location>
</feature>
<feature type="lipid moiety-binding region" description="S-palmitoyl cysteine" evidence="1">
    <location>
        <position position="324"/>
    </location>
</feature>
<feature type="glycosylation site" description="O-linked (GalNAc...) serine" evidence="1">
    <location>
        <position position="6"/>
    </location>
</feature>
<feature type="glycosylation site" description="O-linked (GalNAc...) serine" evidence="1">
    <location>
        <position position="7"/>
    </location>
</feature>
<feature type="disulfide bond" evidence="1">
    <location>
        <begin position="20"/>
        <end position="269"/>
    </location>
</feature>
<feature type="disulfide bond" evidence="4">
    <location>
        <begin position="101"/>
        <end position="178"/>
    </location>
</feature>
<feature type="sequence variant" description="In strain: Isolate 087.">
    <original>D</original>
    <variation>E</variation>
    <location>
        <position position="2"/>
    </location>
</feature>
<feature type="sequence variant" description="In strain: Isolate 079.">
    <original>Y</original>
    <variation>D</variation>
    <location>
        <position position="3"/>
    </location>
</feature>
<feature type="sequence variant" description="In strain: Isolate 087.">
    <original>V</original>
    <variation>G</variation>
    <location>
        <position position="25"/>
    </location>
</feature>
<feature type="sequence variant" description="In strain: Isolate 079.">
    <original>M</original>
    <variation>K</variation>
    <location>
        <position position="100"/>
    </location>
</feature>
<feature type="sequence variant" description="In strain: Isolate 089.">
    <original>L</original>
    <variation>V</variation>
    <location>
        <position position="107"/>
    </location>
</feature>
<feature type="sequence variant" description="In strain: Isolate 079.">
    <original>V</original>
    <variation>G</variation>
    <location>
        <position position="134"/>
    </location>
</feature>
<feature type="sequence variant" description="In strain: Isolate 085 and Isolate 089.">
    <original>V</original>
    <variation>L</variation>
    <location>
        <position position="146"/>
    </location>
</feature>
<feature type="sequence variant" description="In strain: Isolate 079.">
    <original>T</original>
    <variation>I</variation>
    <location>
        <position position="340"/>
    </location>
</feature>
<organism>
    <name type="scientific">Cercocebus atys</name>
    <name type="common">Sooty mangabey</name>
    <name type="synonym">Cercocebus torquatus atys</name>
    <dbReference type="NCBI Taxonomy" id="9531"/>
    <lineage>
        <taxon>Eukaryota</taxon>
        <taxon>Metazoa</taxon>
        <taxon>Chordata</taxon>
        <taxon>Craniata</taxon>
        <taxon>Vertebrata</taxon>
        <taxon>Euteleostomi</taxon>
        <taxon>Mammalia</taxon>
        <taxon>Eutheria</taxon>
        <taxon>Euarchontoglires</taxon>
        <taxon>Primates</taxon>
        <taxon>Haplorrhini</taxon>
        <taxon>Catarrhini</taxon>
        <taxon>Cercopithecidae</taxon>
        <taxon>Cercopithecinae</taxon>
        <taxon>Cercocebus</taxon>
    </lineage>
</organism>
<gene>
    <name type="primary">CCR5</name>
    <name type="synonym">CMKBR5</name>
</gene>